<evidence type="ECO:0000255" key="1">
    <source>
        <dbReference type="PROSITE-ProRule" id="PRU00227"/>
    </source>
</evidence>
<evidence type="ECO:0000256" key="2">
    <source>
        <dbReference type="SAM" id="MobiDB-lite"/>
    </source>
</evidence>
<evidence type="ECO:0000269" key="3">
    <source>
    </source>
</evidence>
<evidence type="ECO:0000269" key="4">
    <source>
    </source>
</evidence>
<evidence type="ECO:0000269" key="5">
    <source>
    </source>
</evidence>
<evidence type="ECO:0000269" key="6">
    <source>
    </source>
</evidence>
<evidence type="ECO:0000269" key="7">
    <source>
    </source>
</evidence>
<evidence type="ECO:0000269" key="8">
    <source>
    </source>
</evidence>
<evidence type="ECO:0000269" key="9">
    <source>
    </source>
</evidence>
<evidence type="ECO:0000269" key="10">
    <source>
    </source>
</evidence>
<evidence type="ECO:0000269" key="11">
    <source>
    </source>
</evidence>
<evidence type="ECO:0000269" key="12">
    <source>
    </source>
</evidence>
<evidence type="ECO:0000303" key="13">
    <source>
    </source>
</evidence>
<evidence type="ECO:0000303" key="14">
    <source>
    </source>
</evidence>
<feature type="chain" id="PRO_0000460205" description="Pigment biosynthesis transcriptional activator pigB">
    <location>
        <begin position="1"/>
        <end position="554"/>
    </location>
</feature>
<feature type="DNA-binding region" description="Zn(2)-C6 fungal-type" evidence="1">
    <location>
        <begin position="23"/>
        <end position="40"/>
    </location>
</feature>
<feature type="region of interest" description="Disordered" evidence="2">
    <location>
        <begin position="1"/>
        <end position="21"/>
    </location>
</feature>
<protein>
    <recommendedName>
        <fullName evidence="14">Pigment biosynthesis transcriptional activator pigB</fullName>
    </recommendedName>
    <alternativeName>
        <fullName evidence="14">Azaphilone pigments biosynthesis cluster protein B</fullName>
    </alternativeName>
</protein>
<accession>R4NN02</accession>
<name>PIGB_MONRU</name>
<keyword id="KW-0238">DNA-binding</keyword>
<keyword id="KW-0479">Metal-binding</keyword>
<keyword id="KW-0539">Nucleus</keyword>
<keyword id="KW-0608">Pigment</keyword>
<keyword id="KW-0804">Transcription</keyword>
<keyword id="KW-0805">Transcription regulation</keyword>
<keyword id="KW-0862">Zinc</keyword>
<dbReference type="EMBL" id="JX393052">
    <property type="protein sequence ID" value="AGL44390.1"/>
    <property type="molecule type" value="Genomic_DNA"/>
</dbReference>
<dbReference type="SMR" id="R4NN02"/>
<dbReference type="GO" id="GO:0005634">
    <property type="term" value="C:nucleus"/>
    <property type="evidence" value="ECO:0007669"/>
    <property type="project" value="UniProtKB-SubCell"/>
</dbReference>
<dbReference type="GO" id="GO:0003677">
    <property type="term" value="F:DNA binding"/>
    <property type="evidence" value="ECO:0007669"/>
    <property type="project" value="UniProtKB-KW"/>
</dbReference>
<dbReference type="GO" id="GO:0000981">
    <property type="term" value="F:DNA-binding transcription factor activity, RNA polymerase II-specific"/>
    <property type="evidence" value="ECO:0007669"/>
    <property type="project" value="InterPro"/>
</dbReference>
<dbReference type="GO" id="GO:0031409">
    <property type="term" value="F:pigment binding"/>
    <property type="evidence" value="ECO:0007669"/>
    <property type="project" value="UniProtKB-KW"/>
</dbReference>
<dbReference type="GO" id="GO:0008270">
    <property type="term" value="F:zinc ion binding"/>
    <property type="evidence" value="ECO:0007669"/>
    <property type="project" value="InterPro"/>
</dbReference>
<dbReference type="GO" id="GO:0006351">
    <property type="term" value="P:DNA-templated transcription"/>
    <property type="evidence" value="ECO:0007669"/>
    <property type="project" value="InterPro"/>
</dbReference>
<dbReference type="CDD" id="cd12148">
    <property type="entry name" value="fungal_TF_MHR"/>
    <property type="match status" value="1"/>
</dbReference>
<dbReference type="CDD" id="cd00067">
    <property type="entry name" value="GAL4"/>
    <property type="match status" value="1"/>
</dbReference>
<dbReference type="Gene3D" id="4.10.240.10">
    <property type="entry name" value="Zn(2)-C6 fungal-type DNA-binding domain"/>
    <property type="match status" value="1"/>
</dbReference>
<dbReference type="InterPro" id="IPR050815">
    <property type="entry name" value="TF_fung"/>
</dbReference>
<dbReference type="InterPro" id="IPR007219">
    <property type="entry name" value="Transcription_factor_dom_fun"/>
</dbReference>
<dbReference type="InterPro" id="IPR036864">
    <property type="entry name" value="Zn2-C6_fun-type_DNA-bd_sf"/>
</dbReference>
<dbReference type="InterPro" id="IPR001138">
    <property type="entry name" value="Zn2Cys6_DnaBD"/>
</dbReference>
<dbReference type="PANTHER" id="PTHR47338:SF3">
    <property type="entry name" value="C6 FINGER DOMAIN TRANSCRIPTION FACTOR DBAA-RELATED"/>
    <property type="match status" value="1"/>
</dbReference>
<dbReference type="PANTHER" id="PTHR47338">
    <property type="entry name" value="ZN(II)2CYS6 TRANSCRIPTION FACTOR (EUROFUNG)-RELATED"/>
    <property type="match status" value="1"/>
</dbReference>
<dbReference type="Pfam" id="PF04082">
    <property type="entry name" value="Fungal_trans"/>
    <property type="match status" value="1"/>
</dbReference>
<dbReference type="Pfam" id="PF00172">
    <property type="entry name" value="Zn_clus"/>
    <property type="match status" value="1"/>
</dbReference>
<dbReference type="SMART" id="SM00906">
    <property type="entry name" value="Fungal_trans"/>
    <property type="match status" value="1"/>
</dbReference>
<dbReference type="SUPFAM" id="SSF57701">
    <property type="entry name" value="Zn2/Cys6 DNA-binding domain"/>
    <property type="match status" value="1"/>
</dbReference>
<sequence>MFTSSSPEQRKPRQSRQLPGAACEECRRKKLRCDRQQPQCGGSSLERRLEQQMQTALLPGDDILNMLDEPAFTVFPSSEDQLGLPAFNITNSTRGEQCQDEQFLDHFADMKGSEFTGTLTTTSIPELMRADLTLRADYRRGNGRDQLYFDRVHIFTPIIHQRRYLSWSKDAHKNEARVCLQYAMWALAASFSAPFQHLRDALYRDARRMLDLLELSDGAMATHHLEQAQAWILVAIYEFMRMNYQVGWMSAGRSFRLVQLMRLYGIDGANSPTQELPQTSSMEWIETEEKRRTFWMAYSLDRFISMRDGWPLTLNEQVVTTCLPAPEAAFQSGKPASGGFLSETITQEDTGALFSFTECIIIATVCGRSLSHGQKLEVERVYGDVSPDFWQRHQWLDAIVKKRIEILSLRCASATEVVDPLLLFTYMMAQTTVLYLCKLVKSVTWETDKSNPIVQEYEQRSLAAAQEIVNLTHTLKQFNFLKVHPFMPLPLYLCAEFLSMYRSLDASFDAQLQEVQNALRNLQAVNNLARTYLNLLQVKEREGSLRSSSEEIDL</sequence>
<reference key="1">
    <citation type="journal article" date="2013" name="Biotechnol. Lett.">
        <title>Deletion of pigR gene in Monascus ruber leads to loss of pigment production.</title>
        <authorList>
            <person name="Xie N."/>
            <person name="Liu Q."/>
            <person name="Chen F."/>
        </authorList>
    </citation>
    <scope>NUCLEOTIDE SEQUENCE [GENOMIC DNA]</scope>
    <scope>FUNCTION</scope>
    <scope>DISRUPTION PHENOTYPE</scope>
    <source>
        <strain>M7</strain>
    </source>
</reference>
<reference key="2">
    <citation type="journal article" date="1977" name="Plant Physiol.">
        <title>Pigmentation and antibacterial activity of fast neutron- and X-ray-induced strains of Monascus purpureus went.</title>
        <authorList>
            <person name="Wong H.C."/>
            <person name="Bau Y.S."/>
        </authorList>
    </citation>
    <scope>BIOTECHNOLOGY</scope>
</reference>
<reference key="3">
    <citation type="journal article" date="2005" name="Chem. Biodivers.">
        <title>Anti-tumor-initiating effects of monascin, an azaphilonoid pigment from the extract of Monascus pilosus fermented rice (red-mold rice).</title>
        <authorList>
            <person name="Akihisa T."/>
            <person name="Tokuda H."/>
            <person name="Ukiya M."/>
            <person name="Kiyota A."/>
            <person name="Yasukawa K."/>
            <person name="Sakamoto N."/>
            <person name="Kimura Y."/>
            <person name="Suzuki T."/>
            <person name="Takayasu J."/>
            <person name="Nishino H."/>
        </authorList>
    </citation>
    <scope>BIOTECHNOLOGY</scope>
</reference>
<reference key="4">
    <citation type="journal article" date="2006" name="Appl. Microbiol. Biotechnol.">
        <title>In vivo hypolipidemic effects and safety of low dosage Monascus powder in a hamster model of hyperlipidemia.</title>
        <authorList>
            <person name="Lee C.L."/>
            <person name="Tsai T.Y."/>
            <person name="Wang J.J."/>
            <person name="Pan T.M."/>
        </authorList>
    </citation>
    <scope>BIOTECHNOLOGY</scope>
</reference>
<reference key="5">
    <citation type="journal article" date="2010" name="J. Agric. Food Chem.">
        <title>Monascin and ankaflavin act as novel hypolipidemic and high-density lipoprotein cholesterol-raising agents in red mold dioscorea.</title>
        <authorList>
            <person name="Lee C.L."/>
            <person name="Kung Y.H."/>
            <person name="Wu C.L."/>
            <person name="Hsu Y.W."/>
            <person name="Pan T.M."/>
        </authorList>
    </citation>
    <scope>BIOTECHNOLOGY</scope>
</reference>
<reference key="6">
    <citation type="journal article" date="2012" name="Appl. Microbiol. Biotechnol.">
        <title>Development of Monascus fermentation technology for high hypolipidemic effect.</title>
        <authorList>
            <person name="Lee C.L."/>
            <person name="Pan T.M."/>
        </authorList>
    </citation>
    <scope>BIOTECHNOLOGY</scope>
</reference>
<reference key="7">
    <citation type="journal article" date="2016" name="Appl. Microbiol. Biotechnol.">
        <title>Identification and role analysis of an intermediate produced by a polygenic mutant of Monascus pigments cluster in Monascus ruber M7.</title>
        <authorList>
            <person name="Liu J."/>
            <person name="Zhou Y."/>
            <person name="Yi T."/>
            <person name="Zhao M."/>
            <person name="Xie N."/>
            <person name="Lei M."/>
            <person name="Liu Q."/>
            <person name="Shao Y."/>
            <person name="Chen F."/>
        </authorList>
    </citation>
    <scope>FUNCTION</scope>
</reference>
<reference key="8">
    <citation type="journal article" date="2017" name="Chem. Sci.">
        <title>Orange, red, yellow: biosynthesis of azaphilone pigments in Monascus fungi.</title>
        <authorList>
            <person name="Chen W."/>
            <person name="Chen R."/>
            <person name="Liu Q."/>
            <person name="He Y."/>
            <person name="He K."/>
            <person name="Ding X."/>
            <person name="Kang L."/>
            <person name="Guo X."/>
            <person name="Xie N."/>
            <person name="Zhou Y."/>
            <person name="Lu Y."/>
            <person name="Cox R.J."/>
            <person name="Molnar I."/>
            <person name="Li M."/>
            <person name="Shao Y."/>
            <person name="Chen F."/>
        </authorList>
    </citation>
    <scope>FUNCTION</scope>
</reference>
<reference key="9">
    <citation type="journal article" date="2021" name="Front. Microbiol.">
        <title>An integrated approach to determine the boundaries of the azaphilone pigment biosynthetic gene cluster of Monascus ruber M7 gown on potato dextrose agar.</title>
        <authorList>
            <person name="Liu Q."/>
            <person name="Zhong S."/>
            <person name="Wang X."/>
            <person name="Gao S."/>
            <person name="Yang X."/>
            <person name="Chen F."/>
            <person name="Molnar I."/>
        </authorList>
    </citation>
    <scope>FUNCTION</scope>
    <scope>DISRUPTION PHENOTYPE</scope>
</reference>
<reference key="10">
    <citation type="journal article" date="2023" name="Food Res. Intern.">
        <title>Improved natural food colorant production in the filamentous fungus Monascus ruber using CRISPR-based engineering.</title>
        <authorList>
            <person name="Ree Yoon H."/>
            <person name="Han S."/>
            <person name="Chul Shin S."/>
            <person name="Cheong Yeom S."/>
            <person name="Jin Kim H."/>
        </authorList>
    </citation>
    <scope>BIOTECHNOLOGY</scope>
</reference>
<proteinExistence type="evidence at protein level"/>
<gene>
    <name evidence="14" type="primary">pigB</name>
    <name evidence="13" type="synonym">pigR</name>
</gene>
<organism>
    <name type="scientific">Monascus ruber</name>
    <name type="common">Mold</name>
    <dbReference type="NCBI Taxonomy" id="89489"/>
    <lineage>
        <taxon>Eukaryota</taxon>
        <taxon>Fungi</taxon>
        <taxon>Dikarya</taxon>
        <taxon>Ascomycota</taxon>
        <taxon>Pezizomycotina</taxon>
        <taxon>Eurotiomycetes</taxon>
        <taxon>Eurotiomycetidae</taxon>
        <taxon>Eurotiales</taxon>
        <taxon>Aspergillaceae</taxon>
        <taxon>Monascus</taxon>
    </lineage>
</organism>
<comment type="function">
    <text evidence="8 9 10 11">Transcription factor; part of the gene cluster that mediates the biosynthesis of azaphilone pigments (MonAzPs), a complex mixture of compounds with a common azaphilone skeleton very widely used as food colorants (PubMed:23690031, PubMed:26946170, PubMed:28959415, PubMed:34220766). Positively regulates the expression of the azaphilone pigments (MonAzPs) gene cluster (PubMed:23690031, PubMed:34220766).</text>
</comment>
<comment type="subcellular location">
    <subcellularLocation>
        <location evidence="1">Nucleus</location>
    </subcellularLocation>
</comment>
<comment type="disruption phenotype">
    <text evidence="8 11">Impairs the production of azaphilone pigments (MonAzPs) (PubMed:23690031). Almost completely abolishes the expression of the azaphilone pigments (MonAzPs) gene cluster gens pigA, pigH, pigM, pigN, pigO and pigP (PubMed:34220766). Decreases the expression of pigD, pigE, pigF and pigG (PubMed:34220766). Does not affect the expression of pigC, pigJ, pigK and pigL (PubMed:34220766).</text>
</comment>
<comment type="biotechnology">
    <text evidence="3 4 5 6 7 12">As colorants, MonAzPs are widely used in various food products for centuries (PubMed:37087240). Moreover, MonAzPs also possess wide-ranging biological activities such as antibacterial activity, preventing hypertension, lowering cholesterol levels, causing hypolipidemic effects, and displaying antiobesity and antitumor activities (PubMed:16283302, PubMed:16660141, PubMed:17191930, PubMed:20666456, PubMed:22562164).</text>
</comment>